<gene>
    <name evidence="1" type="primary">hmuV</name>
    <name type="ordered locus">RHE_CH03271</name>
</gene>
<keyword id="KW-0067">ATP-binding</keyword>
<keyword id="KW-0997">Cell inner membrane</keyword>
<keyword id="KW-1003">Cell membrane</keyword>
<keyword id="KW-0472">Membrane</keyword>
<keyword id="KW-0547">Nucleotide-binding</keyword>
<keyword id="KW-1185">Reference proteome</keyword>
<keyword id="KW-1278">Translocase</keyword>
<keyword id="KW-0813">Transport</keyword>
<accession>Q2K551</accession>
<feature type="chain" id="PRO_0000269615" description="Hemin import ATP-binding protein HmuV">
    <location>
        <begin position="1"/>
        <end position="264"/>
    </location>
</feature>
<feature type="domain" description="ABC transporter" evidence="1">
    <location>
        <begin position="2"/>
        <end position="241"/>
    </location>
</feature>
<feature type="binding site" evidence="1">
    <location>
        <begin position="34"/>
        <end position="41"/>
    </location>
    <ligand>
        <name>ATP</name>
        <dbReference type="ChEBI" id="CHEBI:30616"/>
    </ligand>
</feature>
<dbReference type="EC" id="7.6.2.-" evidence="1"/>
<dbReference type="EMBL" id="CP000133">
    <property type="protein sequence ID" value="ABC92035.1"/>
    <property type="molecule type" value="Genomic_DNA"/>
</dbReference>
<dbReference type="RefSeq" id="WP_011426505.1">
    <property type="nucleotide sequence ID" value="NC_007761.1"/>
</dbReference>
<dbReference type="SMR" id="Q2K551"/>
<dbReference type="KEGG" id="ret:RHE_CH03271"/>
<dbReference type="eggNOG" id="COG4559">
    <property type="taxonomic scope" value="Bacteria"/>
</dbReference>
<dbReference type="HOGENOM" id="CLU_000604_1_11_5"/>
<dbReference type="OrthoDB" id="9810077at2"/>
<dbReference type="Proteomes" id="UP000001936">
    <property type="component" value="Chromosome"/>
</dbReference>
<dbReference type="GO" id="GO:0005886">
    <property type="term" value="C:plasma membrane"/>
    <property type="evidence" value="ECO:0007669"/>
    <property type="project" value="UniProtKB-SubCell"/>
</dbReference>
<dbReference type="GO" id="GO:0005524">
    <property type="term" value="F:ATP binding"/>
    <property type="evidence" value="ECO:0007669"/>
    <property type="project" value="UniProtKB-KW"/>
</dbReference>
<dbReference type="GO" id="GO:0016887">
    <property type="term" value="F:ATP hydrolysis activity"/>
    <property type="evidence" value="ECO:0007669"/>
    <property type="project" value="InterPro"/>
</dbReference>
<dbReference type="CDD" id="cd03214">
    <property type="entry name" value="ABC_Iron-Siderophores_B12_Hemin"/>
    <property type="match status" value="1"/>
</dbReference>
<dbReference type="Gene3D" id="3.40.50.300">
    <property type="entry name" value="P-loop containing nucleotide triphosphate hydrolases"/>
    <property type="match status" value="1"/>
</dbReference>
<dbReference type="InterPro" id="IPR003593">
    <property type="entry name" value="AAA+_ATPase"/>
</dbReference>
<dbReference type="InterPro" id="IPR003439">
    <property type="entry name" value="ABC_transporter-like_ATP-bd"/>
</dbReference>
<dbReference type="InterPro" id="IPR017871">
    <property type="entry name" value="ABC_transporter-like_CS"/>
</dbReference>
<dbReference type="InterPro" id="IPR027417">
    <property type="entry name" value="P-loop_NTPase"/>
</dbReference>
<dbReference type="NCBIfam" id="NF010068">
    <property type="entry name" value="PRK13548.1"/>
    <property type="match status" value="1"/>
</dbReference>
<dbReference type="PANTHER" id="PTHR42794">
    <property type="entry name" value="HEMIN IMPORT ATP-BINDING PROTEIN HMUV"/>
    <property type="match status" value="1"/>
</dbReference>
<dbReference type="PANTHER" id="PTHR42794:SF1">
    <property type="entry name" value="HEMIN IMPORT ATP-BINDING PROTEIN HMUV"/>
    <property type="match status" value="1"/>
</dbReference>
<dbReference type="Pfam" id="PF00005">
    <property type="entry name" value="ABC_tran"/>
    <property type="match status" value="1"/>
</dbReference>
<dbReference type="SMART" id="SM00382">
    <property type="entry name" value="AAA"/>
    <property type="match status" value="1"/>
</dbReference>
<dbReference type="SUPFAM" id="SSF52540">
    <property type="entry name" value="P-loop containing nucleoside triphosphate hydrolases"/>
    <property type="match status" value="1"/>
</dbReference>
<dbReference type="PROSITE" id="PS00211">
    <property type="entry name" value="ABC_TRANSPORTER_1"/>
    <property type="match status" value="1"/>
</dbReference>
<dbReference type="PROSITE" id="PS50893">
    <property type="entry name" value="ABC_TRANSPORTER_2"/>
    <property type="match status" value="1"/>
</dbReference>
<dbReference type="PROSITE" id="PS51261">
    <property type="entry name" value="HMUV"/>
    <property type="match status" value="1"/>
</dbReference>
<sequence length="264" mass="27746">MIEVSGLSVRLSGKSIISDVTFAAKAGELTAIAGPNGSGKTTTMKAISGELAYDGSVRIGGDEVKGLKPWQLAAVRGVLPQASTISFPFTVREIVRMGLTSGLNLHPDKSDQAAAAALASVDLVGFEGRFYQELSGGEQQRVQLARVLCQISEPIVDGKPCWLLLDEPVSSLDISHQLTIMTLARNFCKRGGGVIAVMHDLNLTALFADRVVLIKSGRLAAAGSIEEVLTDATMLSVFGCALRINQIPADGTPFVLAHSALSCP</sequence>
<proteinExistence type="inferred from homology"/>
<reference key="1">
    <citation type="journal article" date="2006" name="Proc. Natl. Acad. Sci. U.S.A.">
        <title>The partitioned Rhizobium etli genome: genetic and metabolic redundancy in seven interacting replicons.</title>
        <authorList>
            <person name="Gonzalez V."/>
            <person name="Santamaria R.I."/>
            <person name="Bustos P."/>
            <person name="Hernandez-Gonzalez I."/>
            <person name="Medrano-Soto A."/>
            <person name="Moreno-Hagelsieb G."/>
            <person name="Janga S.C."/>
            <person name="Ramirez M.A."/>
            <person name="Jimenez-Jacinto V."/>
            <person name="Collado-Vides J."/>
            <person name="Davila G."/>
        </authorList>
    </citation>
    <scope>NUCLEOTIDE SEQUENCE [LARGE SCALE GENOMIC DNA]</scope>
    <source>
        <strain>ATCC 51251 / DSM 11541 / JCM 21823 / NBRC 15573 / CFN 42</strain>
    </source>
</reference>
<name>HMUV_RHIEC</name>
<comment type="function">
    <text evidence="1">Part of the ABC transporter complex HmuTUV involved in hemin import. Responsible for energy coupling to the transport system.</text>
</comment>
<comment type="subunit">
    <text evidence="1">The complex is composed of two ATP-binding proteins (HmuV), two transmembrane proteins (HmuU) and a solute-binding protein (HmuT).</text>
</comment>
<comment type="subcellular location">
    <subcellularLocation>
        <location evidence="1">Cell inner membrane</location>
        <topology evidence="1">Peripheral membrane protein</topology>
    </subcellularLocation>
</comment>
<comment type="similarity">
    <text evidence="1">Belongs to the ABC transporter superfamily. Heme (hemin) importer (TC 3.A.1.14.5) family.</text>
</comment>
<organism>
    <name type="scientific">Rhizobium etli (strain ATCC 51251 / DSM 11541 / JCM 21823 / NBRC 15573 / CFN 42)</name>
    <dbReference type="NCBI Taxonomy" id="347834"/>
    <lineage>
        <taxon>Bacteria</taxon>
        <taxon>Pseudomonadati</taxon>
        <taxon>Pseudomonadota</taxon>
        <taxon>Alphaproteobacteria</taxon>
        <taxon>Hyphomicrobiales</taxon>
        <taxon>Rhizobiaceae</taxon>
        <taxon>Rhizobium/Agrobacterium group</taxon>
        <taxon>Rhizobium</taxon>
    </lineage>
</organism>
<protein>
    <recommendedName>
        <fullName evidence="1">Hemin import ATP-binding protein HmuV</fullName>
        <ecNumber evidence="1">7.6.2.-</ecNumber>
    </recommendedName>
</protein>
<evidence type="ECO:0000255" key="1">
    <source>
        <dbReference type="HAMAP-Rule" id="MF_01718"/>
    </source>
</evidence>